<reference key="1">
    <citation type="journal article" date="2003" name="Plant Cell">
        <title>(E)-beta-ocimene and myrcene synthase genes of floral scent biosynthesis in snapdragon: function and expression of three terpene synthase genes of a new terpene synthase subfamily.</title>
        <authorList>
            <person name="Dudareva N."/>
            <person name="Martin D."/>
            <person name="Kish C.M."/>
            <person name="Kolosova N."/>
            <person name="Gorenstein N."/>
            <person name="Faeldt J."/>
            <person name="Miller B."/>
            <person name="Bohlmann J."/>
        </authorList>
    </citation>
    <scope>NUCLEOTIDE SEQUENCE [MRNA]</scope>
    <scope>FUNCTION</scope>
    <scope>SUBCELLULAR LOCATION</scope>
    <scope>TISSUE SPECIFICITY</scope>
    <scope>DEVELOPMENTAL STAGE</scope>
    <scope>CATALYTIC ACTIVITY</scope>
    <scope>CIRCADIAN-REGULATION</scope>
    <source>
        <tissue>Petal</tissue>
    </source>
</reference>
<keyword id="KW-0150">Chloroplast</keyword>
<keyword id="KW-0325">Glycoprotein</keyword>
<keyword id="KW-0456">Lyase</keyword>
<keyword id="KW-0460">Magnesium</keyword>
<keyword id="KW-0464">Manganese</keyword>
<keyword id="KW-0479">Metal-binding</keyword>
<keyword id="KW-0934">Plastid</keyword>
<keyword id="KW-0809">Transit peptide</keyword>
<dbReference type="EC" id="4.2.3.105"/>
<dbReference type="EC" id="4.2.3.15"/>
<dbReference type="EMBL" id="AY195608">
    <property type="protein sequence ID" value="AAO41726.1"/>
    <property type="molecule type" value="mRNA"/>
</dbReference>
<dbReference type="SMR" id="Q84ND0"/>
<dbReference type="GlyCosmos" id="Q84ND0">
    <property type="glycosylation" value="6 sites, No reported glycans"/>
</dbReference>
<dbReference type="UniPathway" id="UPA00213"/>
<dbReference type="GO" id="GO:0009570">
    <property type="term" value="C:chloroplast stroma"/>
    <property type="evidence" value="ECO:0000250"/>
    <property type="project" value="UniProtKB"/>
</dbReference>
<dbReference type="GO" id="GO:0000287">
    <property type="term" value="F:magnesium ion binding"/>
    <property type="evidence" value="ECO:0007669"/>
    <property type="project" value="InterPro"/>
</dbReference>
<dbReference type="GO" id="GO:0050551">
    <property type="term" value="F:myrcene synthase activity"/>
    <property type="evidence" value="ECO:0000314"/>
    <property type="project" value="UniProtKB"/>
</dbReference>
<dbReference type="GO" id="GO:0010333">
    <property type="term" value="F:terpene synthase activity"/>
    <property type="evidence" value="ECO:0000314"/>
    <property type="project" value="UniProtKB"/>
</dbReference>
<dbReference type="GO" id="GO:0102701">
    <property type="term" value="F:tricyclene synthase activity"/>
    <property type="evidence" value="ECO:0007669"/>
    <property type="project" value="UniProtKB-EC"/>
</dbReference>
<dbReference type="GO" id="GO:0007623">
    <property type="term" value="P:circadian rhythm"/>
    <property type="evidence" value="ECO:0000270"/>
    <property type="project" value="UniProtKB"/>
</dbReference>
<dbReference type="GO" id="GO:0016114">
    <property type="term" value="P:terpenoid biosynthetic process"/>
    <property type="evidence" value="ECO:0007669"/>
    <property type="project" value="UniProtKB-UniPathway"/>
</dbReference>
<dbReference type="FunFam" id="1.10.600.10:FF:000005">
    <property type="entry name" value="Ent-kaur-16-ene synthase, chloroplastic"/>
    <property type="match status" value="1"/>
</dbReference>
<dbReference type="FunFam" id="1.50.10.130:FF:000012">
    <property type="entry name" value="Tricyclene synthase 1e20, chloroplastic"/>
    <property type="match status" value="1"/>
</dbReference>
<dbReference type="Gene3D" id="1.10.600.10">
    <property type="entry name" value="Farnesyl Diphosphate Synthase"/>
    <property type="match status" value="1"/>
</dbReference>
<dbReference type="Gene3D" id="1.50.10.130">
    <property type="entry name" value="Terpene synthase, N-terminal domain"/>
    <property type="match status" value="1"/>
</dbReference>
<dbReference type="InterPro" id="IPR008949">
    <property type="entry name" value="Isoprenoid_synthase_dom_sf"/>
</dbReference>
<dbReference type="InterPro" id="IPR034741">
    <property type="entry name" value="Terpene_cyclase-like_1_C"/>
</dbReference>
<dbReference type="InterPro" id="IPR001906">
    <property type="entry name" value="Terpene_synth_N"/>
</dbReference>
<dbReference type="InterPro" id="IPR036965">
    <property type="entry name" value="Terpene_synth_N_sf"/>
</dbReference>
<dbReference type="InterPro" id="IPR050148">
    <property type="entry name" value="Terpene_synthase-like"/>
</dbReference>
<dbReference type="InterPro" id="IPR005630">
    <property type="entry name" value="Terpene_synthase_metal-bd"/>
</dbReference>
<dbReference type="InterPro" id="IPR008930">
    <property type="entry name" value="Terpenoid_cyclase/PrenylTrfase"/>
</dbReference>
<dbReference type="PANTHER" id="PTHR31225">
    <property type="entry name" value="OS04G0344100 PROTEIN-RELATED"/>
    <property type="match status" value="1"/>
</dbReference>
<dbReference type="PANTHER" id="PTHR31225:SF0">
    <property type="entry name" value="S-(+)-LINALOOL SYNTHASE, CHLOROPLASTIC"/>
    <property type="match status" value="1"/>
</dbReference>
<dbReference type="Pfam" id="PF01397">
    <property type="entry name" value="Terpene_synth"/>
    <property type="match status" value="1"/>
</dbReference>
<dbReference type="Pfam" id="PF03936">
    <property type="entry name" value="Terpene_synth_C"/>
    <property type="match status" value="1"/>
</dbReference>
<dbReference type="SFLD" id="SFLDS00005">
    <property type="entry name" value="Isoprenoid_Synthase_Type_I"/>
    <property type="match status" value="1"/>
</dbReference>
<dbReference type="SFLD" id="SFLDG01019">
    <property type="entry name" value="Terpene_Cyclase_Like_1_C_Termi"/>
    <property type="match status" value="1"/>
</dbReference>
<dbReference type="SUPFAM" id="SSF48239">
    <property type="entry name" value="Terpenoid cyclases/Protein prenyltransferases"/>
    <property type="match status" value="1"/>
</dbReference>
<dbReference type="SUPFAM" id="SSF48576">
    <property type="entry name" value="Terpenoid synthases"/>
    <property type="match status" value="1"/>
</dbReference>
<evidence type="ECO:0000250" key="1"/>
<evidence type="ECO:0000255" key="2"/>
<evidence type="ECO:0000269" key="3">
    <source>
    </source>
</evidence>
<evidence type="ECO:0000305" key="4"/>
<sequence>MAFCISYVGALLPCSLSTRTKFAICHNTSKLHRAAYKTSRWNIPGDVGSTPPPSKLHQALCLNEHSLSCMAELPMDYEGKIKETRHLLHLKGENDPIESLIFVDATLRLGVNHHFQKEIEEILRKSYATMKSPIICEYHTLHEVSLFFRLMRQHGRYVSADVFNNFKGESGRFKEELKRDTRGLVELYEAAQLSFEGERILDEAENFSRQILHGNLAGMEDNLRRSVGNKLRYPFHTSIARFTGRNYDDDLGGMYEWGKTLRELALMDLQVERSVYQEELLQVSKWWNELGLYKKLNLARNRPFEFYTWSMVILADYINLSEQRVELTKSVAFIYLIDDIFDVYGTLDELIIFTEAVNKWDYSATDTLPENMKMCCMTLLDTINGTSQKIYEKHGYNPIDSLKTTWKSLCSAFLVEAKWSASGSLPSANEYLENEKVSSGVYVVLVHLFCLMGLGGTSRGSIELNDTQELMSSIAIIFRLWNDLGSAKNEHQNGKDGSYLNCYKKEHINLTAAQAHEHALELVAIEWKRLNKESFNLNHDSVSSFKQAALNLARMVPLMYSYDHNQRGPVLEEYVKFMLSD</sequence>
<accession>Q84ND0</accession>
<organism>
    <name type="scientific">Antirrhinum majus</name>
    <name type="common">Garden snapdragon</name>
    <dbReference type="NCBI Taxonomy" id="4151"/>
    <lineage>
        <taxon>Eukaryota</taxon>
        <taxon>Viridiplantae</taxon>
        <taxon>Streptophyta</taxon>
        <taxon>Embryophyta</taxon>
        <taxon>Tracheophyta</taxon>
        <taxon>Spermatophyta</taxon>
        <taxon>Magnoliopsida</taxon>
        <taxon>eudicotyledons</taxon>
        <taxon>Gunneridae</taxon>
        <taxon>Pentapetalae</taxon>
        <taxon>asterids</taxon>
        <taxon>lamiids</taxon>
        <taxon>Lamiales</taxon>
        <taxon>Plantaginaceae</taxon>
        <taxon>Antirrhineae</taxon>
        <taxon>Antirrhinum</taxon>
    </lineage>
</organism>
<protein>
    <recommendedName>
        <fullName>Tricyclene synthase Oc15, chloroplastic</fullName>
        <shortName>AmOc15</shortName>
        <ecNumber>4.2.3.105</ecNumber>
    </recommendedName>
    <alternativeName>
        <fullName>Myrcene synthase Oc15</fullName>
        <ecNumber>4.2.3.15</ecNumber>
    </alternativeName>
    <alternativeName>
        <fullName>Terpenoid synthase Oc15</fullName>
    </alternativeName>
</protein>
<feature type="transit peptide" description="Chloroplast" evidence="2">
    <location>
        <begin position="1"/>
        <end position="68"/>
    </location>
</feature>
<feature type="chain" id="PRO_0000418162" description="Tricyclene synthase Oc15, chloroplastic">
    <location>
        <begin position="69"/>
        <end position="581"/>
    </location>
</feature>
<feature type="short sequence motif" description="DDXXD motif">
    <location>
        <begin position="338"/>
        <end position="342"/>
    </location>
</feature>
<feature type="binding site" evidence="1">
    <location>
        <position position="338"/>
    </location>
    <ligand>
        <name>Mg(2+)</name>
        <dbReference type="ChEBI" id="CHEBI:18420"/>
        <label>1</label>
    </ligand>
</feature>
<feature type="binding site" evidence="1">
    <location>
        <position position="338"/>
    </location>
    <ligand>
        <name>Mg(2+)</name>
        <dbReference type="ChEBI" id="CHEBI:18420"/>
        <label>2</label>
    </ligand>
</feature>
<feature type="binding site" evidence="1">
    <location>
        <position position="342"/>
    </location>
    <ligand>
        <name>Mg(2+)</name>
        <dbReference type="ChEBI" id="CHEBI:18420"/>
        <label>1</label>
    </ligand>
</feature>
<feature type="binding site" evidence="1">
    <location>
        <position position="342"/>
    </location>
    <ligand>
        <name>Mg(2+)</name>
        <dbReference type="ChEBI" id="CHEBI:18420"/>
        <label>2</label>
    </ligand>
</feature>
<feature type="binding site" evidence="1">
    <location>
        <position position="482"/>
    </location>
    <ligand>
        <name>Mg(2+)</name>
        <dbReference type="ChEBI" id="CHEBI:18420"/>
        <label>3</label>
    </ligand>
</feature>
<feature type="binding site" evidence="1">
    <location>
        <position position="486"/>
    </location>
    <ligand>
        <name>Mg(2+)</name>
        <dbReference type="ChEBI" id="CHEBI:18420"/>
        <label>3</label>
    </ligand>
</feature>
<feature type="binding site" evidence="1">
    <location>
        <position position="490"/>
    </location>
    <ligand>
        <name>Mg(2+)</name>
        <dbReference type="ChEBI" id="CHEBI:18420"/>
        <label>3</label>
    </ligand>
</feature>
<feature type="glycosylation site" description="N-linked (GlcNAc...) asparagine" evidence="2">
    <location>
        <position position="27"/>
    </location>
</feature>
<feature type="glycosylation site" description="N-linked (GlcNAc...) asparagine" evidence="2">
    <location>
        <position position="206"/>
    </location>
</feature>
<feature type="glycosylation site" description="N-linked (GlcNAc...) asparagine" evidence="2">
    <location>
        <position position="319"/>
    </location>
</feature>
<feature type="glycosylation site" description="N-linked (GlcNAc...) asparagine" evidence="2">
    <location>
        <position position="384"/>
    </location>
</feature>
<feature type="glycosylation site" description="N-linked (GlcNAc...) asparagine" evidence="2">
    <location>
        <position position="465"/>
    </location>
</feature>
<feature type="glycosylation site" description="N-linked (GlcNAc...) asparagine" evidence="2">
    <location>
        <position position="509"/>
    </location>
</feature>
<comment type="function">
    <text evidence="3">Contributes to floral scent emission.</text>
</comment>
<comment type="catalytic activity">
    <reaction evidence="3">
        <text>(2E)-geranyl diphosphate = tricyclene + diphosphate</text>
        <dbReference type="Rhea" id="RHEA:32687"/>
        <dbReference type="ChEBI" id="CHEBI:33019"/>
        <dbReference type="ChEBI" id="CHEBI:58057"/>
        <dbReference type="ChEBI" id="CHEBI:64266"/>
        <dbReference type="EC" id="4.2.3.105"/>
    </reaction>
</comment>
<comment type="catalytic activity">
    <reaction evidence="3">
        <text>(2E)-geranyl diphosphate = beta-myrcene + diphosphate</text>
        <dbReference type="Rhea" id="RHEA:16965"/>
        <dbReference type="ChEBI" id="CHEBI:17221"/>
        <dbReference type="ChEBI" id="CHEBI:33019"/>
        <dbReference type="ChEBI" id="CHEBI:58057"/>
        <dbReference type="EC" id="4.2.3.15"/>
    </reaction>
</comment>
<comment type="cofactor">
    <cofactor evidence="1">
        <name>Mg(2+)</name>
        <dbReference type="ChEBI" id="CHEBI:18420"/>
    </cofactor>
    <cofactor evidence="1">
        <name>Mn(2+)</name>
        <dbReference type="ChEBI" id="CHEBI:29035"/>
    </cofactor>
    <text evidence="1">Binds 3 Mg(2+) or Mn(2+) ions per subunit.</text>
</comment>
<comment type="pathway">
    <text>Secondary metabolite biosynthesis; terpenoid biosynthesis.</text>
</comment>
<comment type="subcellular location">
    <subcellularLocation>
        <location evidence="1">Plastid</location>
        <location evidence="1">Chloroplast stroma</location>
    </subcellularLocation>
</comment>
<comment type="tissue specificity">
    <text evidence="3">Accumulates in flowers; mostly expressed in both upper and lower petal lobes, and, to a lower extent, in tube and stamens.</text>
</comment>
<comment type="developmental stage">
    <text evidence="3">First observed in mature flower buds and accumulates transiently during 4 days after anthesis.</text>
</comment>
<comment type="induction">
    <text>Circadian-regulation with highest levels in early afternoon and lowest levels during the night.</text>
</comment>
<comment type="domain">
    <text>The Asp-Asp-Xaa-Xaa-Asp/Glu (DDXXD/E) motif is important for the catalytic activity, presumably through binding to Mg(2+).</text>
</comment>
<comment type="similarity">
    <text evidence="4">Belongs to the terpene synthase family. Tpsg subfamily.</text>
</comment>
<name>TPS2_ANTMA</name>
<gene>
    <name type="primary">Oc15</name>
</gene>
<proteinExistence type="evidence at protein level"/>